<evidence type="ECO:0000250" key="1"/>
<evidence type="ECO:0000255" key="2">
    <source>
        <dbReference type="HAMAP-Rule" id="MF_00118"/>
    </source>
</evidence>
<reference key="1">
    <citation type="journal article" date="2007" name="PLoS Genet.">
        <title>The complete genome sequence of Yersinia pseudotuberculosis IP31758, the causative agent of Far East scarlet-like fever.</title>
        <authorList>
            <person name="Eppinger M."/>
            <person name="Rosovitz M.J."/>
            <person name="Fricke W.F."/>
            <person name="Rasko D.A."/>
            <person name="Kokorina G."/>
            <person name="Fayolle C."/>
            <person name="Lindler L.E."/>
            <person name="Carniel E."/>
            <person name="Ravel J."/>
        </authorList>
    </citation>
    <scope>NUCLEOTIDE SEQUENCE [LARGE SCALE GENOMIC DNA]</scope>
    <source>
        <strain>IP 31758</strain>
    </source>
</reference>
<sequence>MSKEKFERTKPHVNVGTIGHVDHGKTTLTAAITTVLAKTYGGSARAFDQIDNAPEEKARGITINTSHVEYDTPARHYAHVDCPGHADYVKNMITGAAQMDGAILVVAATDGPMPQTREHILLGRQVGVPYIIVFLNKCDMVDDEELLELVEMEVRELLSQYDFPGDDTPVIRGSALKALEGDAEWEAKIIELAEALDSYIPQPERAIDRPFLLPIEDVFSISGRGTVVTGRVERGIVKVGEEVEIVGIIDTIKTTCTGVEMFRKLLDEGRAGENVGVLLRGTKRDDVQRGQVLAKPGSIKPHTKFESEVYILSKDEGGRHTPFFKGYRPQFYFRTTDVTGTIELPEGVEMVMPGDNVNMVVNLIAPIAMDDGLRFAIREGGRTVGAGVVAKVIE</sequence>
<name>EFTU1_YERP3</name>
<feature type="chain" id="PRO_0000337591" description="Elongation factor Tu 1">
    <location>
        <begin position="1"/>
        <end position="394"/>
    </location>
</feature>
<feature type="domain" description="tr-type G">
    <location>
        <begin position="10"/>
        <end position="204"/>
    </location>
</feature>
<feature type="region of interest" description="G1" evidence="1">
    <location>
        <begin position="19"/>
        <end position="26"/>
    </location>
</feature>
<feature type="region of interest" description="G2" evidence="1">
    <location>
        <begin position="60"/>
        <end position="64"/>
    </location>
</feature>
<feature type="region of interest" description="G3" evidence="1">
    <location>
        <begin position="81"/>
        <end position="84"/>
    </location>
</feature>
<feature type="region of interest" description="G4" evidence="1">
    <location>
        <begin position="136"/>
        <end position="139"/>
    </location>
</feature>
<feature type="region of interest" description="G5" evidence="1">
    <location>
        <begin position="174"/>
        <end position="176"/>
    </location>
</feature>
<feature type="binding site" evidence="2">
    <location>
        <begin position="19"/>
        <end position="26"/>
    </location>
    <ligand>
        <name>GTP</name>
        <dbReference type="ChEBI" id="CHEBI:37565"/>
    </ligand>
</feature>
<feature type="binding site" evidence="2">
    <location>
        <position position="26"/>
    </location>
    <ligand>
        <name>Mg(2+)</name>
        <dbReference type="ChEBI" id="CHEBI:18420"/>
    </ligand>
</feature>
<feature type="binding site" evidence="2">
    <location>
        <begin position="81"/>
        <end position="85"/>
    </location>
    <ligand>
        <name>GTP</name>
        <dbReference type="ChEBI" id="CHEBI:37565"/>
    </ligand>
</feature>
<feature type="binding site" evidence="2">
    <location>
        <begin position="136"/>
        <end position="139"/>
    </location>
    <ligand>
        <name>GTP</name>
        <dbReference type="ChEBI" id="CHEBI:37565"/>
    </ligand>
</feature>
<accession>A7FNJ0</accession>
<gene>
    <name evidence="2" type="primary">tuf1</name>
    <name type="ordered locus">YpsIP31758_3867</name>
</gene>
<keyword id="KW-0963">Cytoplasm</keyword>
<keyword id="KW-0251">Elongation factor</keyword>
<keyword id="KW-0342">GTP-binding</keyword>
<keyword id="KW-0378">Hydrolase</keyword>
<keyword id="KW-0460">Magnesium</keyword>
<keyword id="KW-0479">Metal-binding</keyword>
<keyword id="KW-0547">Nucleotide-binding</keyword>
<keyword id="KW-0648">Protein biosynthesis</keyword>
<dbReference type="EC" id="3.6.5.3" evidence="2"/>
<dbReference type="EMBL" id="CP000720">
    <property type="protein sequence ID" value="ABS46016.1"/>
    <property type="molecule type" value="Genomic_DNA"/>
</dbReference>
<dbReference type="SMR" id="A7FNJ0"/>
<dbReference type="KEGG" id="ypi:YpsIP31758_3867"/>
<dbReference type="HOGENOM" id="CLU_007265_0_0_6"/>
<dbReference type="Proteomes" id="UP000002412">
    <property type="component" value="Chromosome"/>
</dbReference>
<dbReference type="GO" id="GO:0005829">
    <property type="term" value="C:cytosol"/>
    <property type="evidence" value="ECO:0007669"/>
    <property type="project" value="TreeGrafter"/>
</dbReference>
<dbReference type="GO" id="GO:0005525">
    <property type="term" value="F:GTP binding"/>
    <property type="evidence" value="ECO:0007669"/>
    <property type="project" value="UniProtKB-UniRule"/>
</dbReference>
<dbReference type="GO" id="GO:0003924">
    <property type="term" value="F:GTPase activity"/>
    <property type="evidence" value="ECO:0007669"/>
    <property type="project" value="InterPro"/>
</dbReference>
<dbReference type="GO" id="GO:0097216">
    <property type="term" value="F:guanosine tetraphosphate binding"/>
    <property type="evidence" value="ECO:0007669"/>
    <property type="project" value="UniProtKB-ARBA"/>
</dbReference>
<dbReference type="GO" id="GO:0003746">
    <property type="term" value="F:translation elongation factor activity"/>
    <property type="evidence" value="ECO:0007669"/>
    <property type="project" value="UniProtKB-UniRule"/>
</dbReference>
<dbReference type="CDD" id="cd01884">
    <property type="entry name" value="EF_Tu"/>
    <property type="match status" value="1"/>
</dbReference>
<dbReference type="CDD" id="cd03697">
    <property type="entry name" value="EFTU_II"/>
    <property type="match status" value="1"/>
</dbReference>
<dbReference type="CDD" id="cd03707">
    <property type="entry name" value="EFTU_III"/>
    <property type="match status" value="1"/>
</dbReference>
<dbReference type="FunFam" id="2.40.30.10:FF:000001">
    <property type="entry name" value="Elongation factor Tu"/>
    <property type="match status" value="1"/>
</dbReference>
<dbReference type="FunFam" id="3.40.50.300:FF:000003">
    <property type="entry name" value="Elongation factor Tu"/>
    <property type="match status" value="1"/>
</dbReference>
<dbReference type="Gene3D" id="3.40.50.300">
    <property type="entry name" value="P-loop containing nucleotide triphosphate hydrolases"/>
    <property type="match status" value="1"/>
</dbReference>
<dbReference type="Gene3D" id="2.40.30.10">
    <property type="entry name" value="Translation factors"/>
    <property type="match status" value="2"/>
</dbReference>
<dbReference type="HAMAP" id="MF_00118_B">
    <property type="entry name" value="EF_Tu_B"/>
    <property type="match status" value="1"/>
</dbReference>
<dbReference type="InterPro" id="IPR041709">
    <property type="entry name" value="EF-Tu_GTP-bd"/>
</dbReference>
<dbReference type="InterPro" id="IPR050055">
    <property type="entry name" value="EF-Tu_GTPase"/>
</dbReference>
<dbReference type="InterPro" id="IPR004161">
    <property type="entry name" value="EFTu-like_2"/>
</dbReference>
<dbReference type="InterPro" id="IPR033720">
    <property type="entry name" value="EFTU_2"/>
</dbReference>
<dbReference type="InterPro" id="IPR031157">
    <property type="entry name" value="G_TR_CS"/>
</dbReference>
<dbReference type="InterPro" id="IPR027417">
    <property type="entry name" value="P-loop_NTPase"/>
</dbReference>
<dbReference type="InterPro" id="IPR005225">
    <property type="entry name" value="Small_GTP-bd"/>
</dbReference>
<dbReference type="InterPro" id="IPR000795">
    <property type="entry name" value="T_Tr_GTP-bd_dom"/>
</dbReference>
<dbReference type="InterPro" id="IPR009000">
    <property type="entry name" value="Transl_B-barrel_sf"/>
</dbReference>
<dbReference type="InterPro" id="IPR009001">
    <property type="entry name" value="Transl_elong_EF1A/Init_IF2_C"/>
</dbReference>
<dbReference type="InterPro" id="IPR004541">
    <property type="entry name" value="Transl_elong_EFTu/EF1A_bac/org"/>
</dbReference>
<dbReference type="InterPro" id="IPR004160">
    <property type="entry name" value="Transl_elong_EFTu/EF1A_C"/>
</dbReference>
<dbReference type="NCBIfam" id="TIGR00485">
    <property type="entry name" value="EF-Tu"/>
    <property type="match status" value="1"/>
</dbReference>
<dbReference type="NCBIfam" id="NF000766">
    <property type="entry name" value="PRK00049.1"/>
    <property type="match status" value="1"/>
</dbReference>
<dbReference type="NCBIfam" id="NF009372">
    <property type="entry name" value="PRK12735.1"/>
    <property type="match status" value="1"/>
</dbReference>
<dbReference type="NCBIfam" id="NF009373">
    <property type="entry name" value="PRK12736.1"/>
    <property type="match status" value="1"/>
</dbReference>
<dbReference type="NCBIfam" id="TIGR00231">
    <property type="entry name" value="small_GTP"/>
    <property type="match status" value="1"/>
</dbReference>
<dbReference type="PANTHER" id="PTHR43721:SF22">
    <property type="entry name" value="ELONGATION FACTOR TU, MITOCHONDRIAL"/>
    <property type="match status" value="1"/>
</dbReference>
<dbReference type="PANTHER" id="PTHR43721">
    <property type="entry name" value="ELONGATION FACTOR TU-RELATED"/>
    <property type="match status" value="1"/>
</dbReference>
<dbReference type="Pfam" id="PF00009">
    <property type="entry name" value="GTP_EFTU"/>
    <property type="match status" value="1"/>
</dbReference>
<dbReference type="Pfam" id="PF03144">
    <property type="entry name" value="GTP_EFTU_D2"/>
    <property type="match status" value="1"/>
</dbReference>
<dbReference type="Pfam" id="PF03143">
    <property type="entry name" value="GTP_EFTU_D3"/>
    <property type="match status" value="1"/>
</dbReference>
<dbReference type="PRINTS" id="PR00315">
    <property type="entry name" value="ELONGATNFCT"/>
</dbReference>
<dbReference type="SUPFAM" id="SSF50465">
    <property type="entry name" value="EF-Tu/eEF-1alpha/eIF2-gamma C-terminal domain"/>
    <property type="match status" value="1"/>
</dbReference>
<dbReference type="SUPFAM" id="SSF52540">
    <property type="entry name" value="P-loop containing nucleoside triphosphate hydrolases"/>
    <property type="match status" value="1"/>
</dbReference>
<dbReference type="SUPFAM" id="SSF50447">
    <property type="entry name" value="Translation proteins"/>
    <property type="match status" value="1"/>
</dbReference>
<dbReference type="PROSITE" id="PS00301">
    <property type="entry name" value="G_TR_1"/>
    <property type="match status" value="1"/>
</dbReference>
<dbReference type="PROSITE" id="PS51722">
    <property type="entry name" value="G_TR_2"/>
    <property type="match status" value="1"/>
</dbReference>
<protein>
    <recommendedName>
        <fullName evidence="2">Elongation factor Tu 1</fullName>
        <shortName evidence="2">EF-Tu 1</shortName>
        <ecNumber evidence="2">3.6.5.3</ecNumber>
    </recommendedName>
</protein>
<organism>
    <name type="scientific">Yersinia pseudotuberculosis serotype O:1b (strain IP 31758)</name>
    <dbReference type="NCBI Taxonomy" id="349747"/>
    <lineage>
        <taxon>Bacteria</taxon>
        <taxon>Pseudomonadati</taxon>
        <taxon>Pseudomonadota</taxon>
        <taxon>Gammaproteobacteria</taxon>
        <taxon>Enterobacterales</taxon>
        <taxon>Yersiniaceae</taxon>
        <taxon>Yersinia</taxon>
    </lineage>
</organism>
<proteinExistence type="inferred from homology"/>
<comment type="function">
    <text evidence="2">GTP hydrolase that promotes the GTP-dependent binding of aminoacyl-tRNA to the A-site of ribosomes during protein biosynthesis.</text>
</comment>
<comment type="catalytic activity">
    <reaction evidence="2">
        <text>GTP + H2O = GDP + phosphate + H(+)</text>
        <dbReference type="Rhea" id="RHEA:19669"/>
        <dbReference type="ChEBI" id="CHEBI:15377"/>
        <dbReference type="ChEBI" id="CHEBI:15378"/>
        <dbReference type="ChEBI" id="CHEBI:37565"/>
        <dbReference type="ChEBI" id="CHEBI:43474"/>
        <dbReference type="ChEBI" id="CHEBI:58189"/>
        <dbReference type="EC" id="3.6.5.3"/>
    </reaction>
    <physiologicalReaction direction="left-to-right" evidence="2">
        <dbReference type="Rhea" id="RHEA:19670"/>
    </physiologicalReaction>
</comment>
<comment type="subunit">
    <text evidence="2">Monomer.</text>
</comment>
<comment type="subcellular location">
    <subcellularLocation>
        <location evidence="2">Cytoplasm</location>
    </subcellularLocation>
</comment>
<comment type="similarity">
    <text evidence="2">Belongs to the TRAFAC class translation factor GTPase superfamily. Classic translation factor GTPase family. EF-Tu/EF-1A subfamily.</text>
</comment>